<comment type="function">
    <text evidence="2">Catalyzes the ATP- and formate-dependent formylation of 5-aminoimidazole-4-carboxamide-1-beta-d-ribofuranosyl 5'-monophosphate (AICAR) to 5-formaminoimidazole-4-carboxamide-1-beta-d-ribofuranosyl 5'-monophosphate (FAICAR) in the absence of folates.</text>
</comment>
<comment type="catalytic activity">
    <reaction evidence="2">
        <text>5-amino-1-(5-phospho-beta-D-ribosyl)imidazole-4-carboxamide + formate + ATP = 5-formamido-1-(5-phospho-D-ribosyl)imidazole-4-carboxamide + ADP + phosphate</text>
        <dbReference type="Rhea" id="RHEA:24836"/>
        <dbReference type="ChEBI" id="CHEBI:15740"/>
        <dbReference type="ChEBI" id="CHEBI:30616"/>
        <dbReference type="ChEBI" id="CHEBI:43474"/>
        <dbReference type="ChEBI" id="CHEBI:58467"/>
        <dbReference type="ChEBI" id="CHEBI:58475"/>
        <dbReference type="ChEBI" id="CHEBI:456216"/>
        <dbReference type="EC" id="6.3.4.23"/>
    </reaction>
</comment>
<comment type="cofactor">
    <cofactor evidence="1">
        <name>Mg(2+)</name>
        <dbReference type="ChEBI" id="CHEBI:18420"/>
    </cofactor>
    <cofactor evidence="1">
        <name>Mn(2+)</name>
        <dbReference type="ChEBI" id="CHEBI:29035"/>
    </cofactor>
    <text evidence="1">Binds 1 Mg(2+) or Mn(2+) ion per subunit.</text>
</comment>
<comment type="pathway">
    <text evidence="2">Purine metabolism; IMP biosynthesis via de novo pathway; 5-formamido-1-(5-phospho-D-ribosyl)imidazole-4-carboxamide from 5-amino-1-(5-phospho-D-ribosyl)imidazole-4-carboxamide (formate route): step 1/1.</text>
</comment>
<comment type="similarity">
    <text evidence="2">Belongs to the phosphohexose mutase family.</text>
</comment>
<evidence type="ECO:0000250" key="1"/>
<evidence type="ECO:0000255" key="2">
    <source>
        <dbReference type="HAMAP-Rule" id="MF_01163"/>
    </source>
</evidence>
<gene>
    <name evidence="2" type="primary">purP</name>
    <name type="ordered locus">MmarC7_0618</name>
</gene>
<protein>
    <recommendedName>
        <fullName evidence="2">5-formaminoimidazole-4-carboxamide-1-(beta)-D-ribofuranosyl 5'-monophosphate synthetase</fullName>
        <ecNumber evidence="2">6.3.4.23</ecNumber>
    </recommendedName>
    <alternativeName>
        <fullName evidence="2">5-aminoimidazole-4-carboxamide-1-beta-D-ribofuranosyl 5'-monophosphate--formate ligase</fullName>
    </alternativeName>
</protein>
<dbReference type="EC" id="6.3.4.23" evidence="2"/>
<dbReference type="EMBL" id="CP000745">
    <property type="protein sequence ID" value="ABR65685.1"/>
    <property type="molecule type" value="Genomic_DNA"/>
</dbReference>
<dbReference type="SMR" id="A6VGV9"/>
<dbReference type="STRING" id="426368.MmarC7_0618"/>
<dbReference type="KEGG" id="mmz:MmarC7_0618"/>
<dbReference type="eggNOG" id="arCOG04346">
    <property type="taxonomic scope" value="Archaea"/>
</dbReference>
<dbReference type="HOGENOM" id="CLU_065084_0_0_2"/>
<dbReference type="OrthoDB" id="98133at2157"/>
<dbReference type="UniPathway" id="UPA00074">
    <property type="reaction ID" value="UER00134"/>
</dbReference>
<dbReference type="GO" id="GO:0005524">
    <property type="term" value="F:ATP binding"/>
    <property type="evidence" value="ECO:0007669"/>
    <property type="project" value="UniProtKB-KW"/>
</dbReference>
<dbReference type="GO" id="GO:0016879">
    <property type="term" value="F:ligase activity, forming carbon-nitrogen bonds"/>
    <property type="evidence" value="ECO:0007669"/>
    <property type="project" value="UniProtKB-UniRule"/>
</dbReference>
<dbReference type="GO" id="GO:0000287">
    <property type="term" value="F:magnesium ion binding"/>
    <property type="evidence" value="ECO:0007669"/>
    <property type="project" value="InterPro"/>
</dbReference>
<dbReference type="GO" id="GO:0006189">
    <property type="term" value="P:'de novo' IMP biosynthetic process"/>
    <property type="evidence" value="ECO:0007669"/>
    <property type="project" value="UniProtKB-UniRule"/>
</dbReference>
<dbReference type="Gene3D" id="3.40.50.20">
    <property type="match status" value="1"/>
</dbReference>
<dbReference type="Gene3D" id="3.30.1490.20">
    <property type="entry name" value="ATP-grasp fold, A domain"/>
    <property type="match status" value="1"/>
</dbReference>
<dbReference type="Gene3D" id="3.30.470.20">
    <property type="entry name" value="ATP-grasp fold, B domain"/>
    <property type="match status" value="1"/>
</dbReference>
<dbReference type="HAMAP" id="MF_01163">
    <property type="entry name" value="IMP_biosynth_PurP"/>
    <property type="match status" value="1"/>
</dbReference>
<dbReference type="InterPro" id="IPR013815">
    <property type="entry name" value="ATP_grasp_subdomain_1"/>
</dbReference>
<dbReference type="InterPro" id="IPR023656">
    <property type="entry name" value="IMP_biosynth_PurP"/>
</dbReference>
<dbReference type="InterPro" id="IPR009720">
    <property type="entry name" value="IMP_biosynth_PurP_C"/>
</dbReference>
<dbReference type="InterPro" id="IPR010672">
    <property type="entry name" value="IMP_biosynth_PurP_N"/>
</dbReference>
<dbReference type="InterPro" id="IPR016185">
    <property type="entry name" value="PreATP-grasp_dom_sf"/>
</dbReference>
<dbReference type="NCBIfam" id="NF009780">
    <property type="entry name" value="PRK13278.1-5"/>
    <property type="match status" value="1"/>
</dbReference>
<dbReference type="PANTHER" id="PTHR38147:SF2">
    <property type="entry name" value="5-FORMAMINOIMIDAZOLE-4-CARBOXAMIDE-1-(BETA)-D-RIBOFURANOSYL 5'-MONOPHOSPHATE SYNTHETASE"/>
    <property type="match status" value="1"/>
</dbReference>
<dbReference type="PANTHER" id="PTHR38147">
    <property type="entry name" value="5-FORMAMINOIMIDAZOLE-4-CARBOXAMIDE-1-(BETA)-D-RIBOFURANOSYL 5'-MONOPHOSPHATE SYNTHETASE-RELATED"/>
    <property type="match status" value="1"/>
</dbReference>
<dbReference type="Pfam" id="PF06849">
    <property type="entry name" value="DUF1246"/>
    <property type="match status" value="1"/>
</dbReference>
<dbReference type="Pfam" id="PF06973">
    <property type="entry name" value="DUF1297"/>
    <property type="match status" value="1"/>
</dbReference>
<dbReference type="PIRSF" id="PIRSF004602">
    <property type="entry name" value="ATPgrasp_PurP"/>
    <property type="match status" value="1"/>
</dbReference>
<dbReference type="SUPFAM" id="SSF56059">
    <property type="entry name" value="Glutathione synthetase ATP-binding domain-like"/>
    <property type="match status" value="1"/>
</dbReference>
<dbReference type="SUPFAM" id="SSF52440">
    <property type="entry name" value="PreATP-grasp domain"/>
    <property type="match status" value="1"/>
</dbReference>
<accession>A6VGV9</accession>
<proteinExistence type="inferred from homology"/>
<feature type="chain" id="PRO_0000348623" description="5-formaminoimidazole-4-carboxamide-1-(beta)-D-ribofuranosyl 5'-monophosphate synthetase">
    <location>
        <begin position="1"/>
        <end position="361"/>
    </location>
</feature>
<feature type="domain" description="ATP-grasp" evidence="2">
    <location>
        <begin position="116"/>
        <end position="348"/>
    </location>
</feature>
<feature type="binding site" evidence="2">
    <location>
        <position position="27"/>
    </location>
    <ligand>
        <name>5-amino-1-(5-phospho-beta-D-ribosyl)imidazole-4-carboxamide</name>
        <dbReference type="ChEBI" id="CHEBI:58475"/>
    </ligand>
</feature>
<feature type="binding site" evidence="2">
    <location>
        <position position="94"/>
    </location>
    <ligand>
        <name>5-amino-1-(5-phospho-beta-D-ribosyl)imidazole-4-carboxamide</name>
        <dbReference type="ChEBI" id="CHEBI:58475"/>
    </ligand>
</feature>
<feature type="binding site" evidence="2">
    <location>
        <begin position="146"/>
        <end position="208"/>
    </location>
    <ligand>
        <name>ATP</name>
        <dbReference type="ChEBI" id="CHEBI:30616"/>
    </ligand>
</feature>
<feature type="binding site" evidence="2">
    <location>
        <position position="230"/>
    </location>
    <ligand>
        <name>ATP</name>
        <dbReference type="ChEBI" id="CHEBI:30616"/>
    </ligand>
</feature>
<feature type="binding site" evidence="2">
    <location>
        <position position="258"/>
    </location>
    <ligand>
        <name>5-amino-1-(5-phospho-beta-D-ribosyl)imidazole-4-carboxamide</name>
        <dbReference type="ChEBI" id="CHEBI:58475"/>
    </ligand>
</feature>
<feature type="binding site" evidence="2">
    <location>
        <position position="297"/>
    </location>
    <ligand>
        <name>Mg(2+)</name>
        <dbReference type="ChEBI" id="CHEBI:18420"/>
    </ligand>
</feature>
<feature type="binding site" evidence="2">
    <location>
        <position position="310"/>
    </location>
    <ligand>
        <name>Mg(2+)</name>
        <dbReference type="ChEBI" id="CHEBI:18420"/>
    </ligand>
</feature>
<reference key="1">
    <citation type="submission" date="2007-06" db="EMBL/GenBank/DDBJ databases">
        <title>Complete sequence of Methanococcus maripaludis C7.</title>
        <authorList>
            <consortium name="US DOE Joint Genome Institute"/>
            <person name="Copeland A."/>
            <person name="Lucas S."/>
            <person name="Lapidus A."/>
            <person name="Barry K."/>
            <person name="Glavina del Rio T."/>
            <person name="Dalin E."/>
            <person name="Tice H."/>
            <person name="Pitluck S."/>
            <person name="Clum A."/>
            <person name="Schmutz J."/>
            <person name="Larimer F."/>
            <person name="Land M."/>
            <person name="Hauser L."/>
            <person name="Kyrpides N."/>
            <person name="Anderson I."/>
            <person name="Sieprawska-Lupa M."/>
            <person name="Whitman W.B."/>
            <person name="Richardson P."/>
        </authorList>
    </citation>
    <scope>NUCLEOTIDE SEQUENCE [LARGE SCALE GENOMIC DNA]</scope>
    <source>
        <strain>C7 / ATCC BAA-1331</strain>
    </source>
</reference>
<keyword id="KW-0067">ATP-binding</keyword>
<keyword id="KW-0436">Ligase</keyword>
<keyword id="KW-0460">Magnesium</keyword>
<keyword id="KW-0464">Manganese</keyword>
<keyword id="KW-0479">Metal-binding</keyword>
<keyword id="KW-0547">Nucleotide-binding</keyword>
<keyword id="KW-0658">Purine biosynthesis</keyword>
<organism>
    <name type="scientific">Methanococcus maripaludis (strain C7 / ATCC BAA-1331)</name>
    <dbReference type="NCBI Taxonomy" id="426368"/>
    <lineage>
        <taxon>Archaea</taxon>
        <taxon>Methanobacteriati</taxon>
        <taxon>Methanobacteriota</taxon>
        <taxon>Methanomada group</taxon>
        <taxon>Methanococci</taxon>
        <taxon>Methanococcales</taxon>
        <taxon>Methanococcaceae</taxon>
        <taxon>Methanococcus</taxon>
    </lineage>
</organism>
<sequence length="361" mass="40497">MIPKEEIMGIFEKYNKDEVTIVTVGSHTSLHILKGAKLEGFSTAVITTRDRDIPYKRFGVADKFIYVDKFSDISKEEIQQQLRDMNAIIVPHGSFIAYCGLDNVEDTFKVPMFGNRAILRWEAERDLEGQLLGGSGLRIPKKYGGPDDIDGPVMVKFPGARGGRGYFPCSTVEEFWRKIDEFKAKGILTEDDVAKAHIEEYVVGANYCIHYFYSPLKDQVELMGIDRRYESSIDGLVRVPAKDQLELSIDPSYVITGNFPVVIRESLLPQVFDMGDKLATKAKELVKPGMLGPFCLQSLCNENLELVVFEMSARVDGGTNTFMNGSPYSCLYTGEPLSMGQRIAREIKLALELKMIDKVIS</sequence>
<name>PURP_METM7</name>